<organismHost>
    <name type="scientific">Homo sapiens</name>
    <name type="common">Human</name>
    <dbReference type="NCBI Taxonomy" id="9606"/>
</organismHost>
<comment type="function">
    <text evidence="1">Plays a major role in the induction and maintenance of cellular transformation. E6 associates with host UBE3A/E6-AP ubiquitin-protein ligase and modulates its activity. Sequesters tumor suppressor TP53 in the host cytoplasm and modulates its activity by interacting with host EP300 that results in the reduction of TP53 acetylation and activation. In turn, apoptosis induced by DNA damage is inhibited. E6 also protects host keratinocytes from apoptosis by mediating the degradation of host BAK1. May also inhibit host immune response.</text>
</comment>
<comment type="subunit">
    <text evidence="1">Forms homodimers. Interacts with ubiquitin-protein ligase UBE3A/E6-AP; this interaction stimulates UBE3A ubiquitin activity. Interacts with host TP53 and EP300; this interaction inhibits TP53 activity.</text>
</comment>
<comment type="subcellular location">
    <subcellularLocation>
        <location evidence="1">Host cytoplasm</location>
    </subcellularLocation>
    <subcellularLocation>
        <location evidence="1">Host nucleus</location>
    </subcellularLocation>
</comment>
<comment type="miscellaneous">
    <text evidence="1">Belongs to the low risk human alphapapillomavirus family. The cancer-causing human papillomavirus E6 protein has a unique carboxy terminal PDZ domain containing substrate but low risk E6s do not possess this domain.</text>
</comment>
<comment type="similarity">
    <text evidence="2">Belongs to the papillomaviridae E6 protein family.</text>
</comment>
<comment type="sequence caution" evidence="2">
    <conflict type="erroneous initiation">
        <sequence resource="EMBL-CDS" id="AAA47041"/>
    </conflict>
</comment>
<feature type="chain" id="PRO_0000133361" description="Protein E6">
    <location>
        <begin position="1"/>
        <end position="150"/>
    </location>
</feature>
<feature type="zinc finger region" evidence="1">
    <location>
        <begin position="31"/>
        <end position="67"/>
    </location>
</feature>
<feature type="zinc finger region" evidence="1">
    <location>
        <begin position="104"/>
        <end position="140"/>
    </location>
</feature>
<reference key="1">
    <citation type="journal article" date="1992" name="Virology">
        <title>Human papillomavirus type 42: new sequences, conserved genome organization.</title>
        <authorList>
            <person name="Philipp W."/>
            <person name="Honore N."/>
            <person name="Sapp M."/>
            <person name="Cole S.T."/>
            <person name="Streeck R.E."/>
        </authorList>
    </citation>
    <scope>NUCLEOTIDE SEQUENCE [GENOMIC DNA]</scope>
</reference>
<organism>
    <name type="scientific">Human papillomavirus 42</name>
    <dbReference type="NCBI Taxonomy" id="10590"/>
    <lineage>
        <taxon>Viruses</taxon>
        <taxon>Monodnaviria</taxon>
        <taxon>Shotokuvirae</taxon>
        <taxon>Cossaviricota</taxon>
        <taxon>Papovaviricetes</taxon>
        <taxon>Zurhausenvirales</taxon>
        <taxon>Papillomaviridae</taxon>
        <taxon>Firstpapillomavirinae</taxon>
        <taxon>Alphapapillomavirus</taxon>
        <taxon>Alphapapillomavirus 1</taxon>
    </lineage>
</organism>
<evidence type="ECO:0000255" key="1">
    <source>
        <dbReference type="HAMAP-Rule" id="MF_04006"/>
    </source>
</evidence>
<evidence type="ECO:0000305" key="2"/>
<proteinExistence type="inferred from homology"/>
<gene>
    <name evidence="1" type="primary">E6</name>
</gene>
<name>VE6_HPV42</name>
<protein>
    <recommendedName>
        <fullName evidence="1">Protein E6</fullName>
    </recommendedName>
</protein>
<sequence>MSGTSASSQPRTLYQLCKEFGLTLRNLQISCIWCKKHLTGAEVLAYHFKDLVVVWRKDFPYAACAFCLEFNSKICALRHYERSAFWYTVEKETGLLLEEQQIRCALCQKPLSQSEKNHHIDTGTRFQFILCQWTGRCTHCRGQCVERRLP</sequence>
<keyword id="KW-0010">Activator</keyword>
<keyword id="KW-0238">DNA-binding</keyword>
<keyword id="KW-0244">Early protein</keyword>
<keyword id="KW-1035">Host cytoplasm</keyword>
<keyword id="KW-1048">Host nucleus</keyword>
<keyword id="KW-0945">Host-virus interaction</keyword>
<keyword id="KW-1090">Inhibition of host innate immune response by virus</keyword>
<keyword id="KW-0479">Metal-binding</keyword>
<keyword id="KW-1119">Modulation of host cell apoptosis by virus</keyword>
<keyword id="KW-0804">Transcription</keyword>
<keyword id="KW-0805">Transcription regulation</keyword>
<keyword id="KW-0899">Viral immunoevasion</keyword>
<keyword id="KW-0862">Zinc</keyword>
<keyword id="KW-0863">Zinc-finger</keyword>
<dbReference type="EMBL" id="M73236">
    <property type="protein sequence ID" value="AAA47041.1"/>
    <property type="status" value="ALT_INIT"/>
    <property type="molecule type" value="Genomic_DNA"/>
</dbReference>
<dbReference type="PIR" id="E39451">
    <property type="entry name" value="W6WL42"/>
</dbReference>
<dbReference type="SMR" id="P27229"/>
<dbReference type="Proteomes" id="UP000009122">
    <property type="component" value="Genome"/>
</dbReference>
<dbReference type="GO" id="GO:0030430">
    <property type="term" value="C:host cell cytoplasm"/>
    <property type="evidence" value="ECO:0007669"/>
    <property type="project" value="UniProtKB-SubCell"/>
</dbReference>
<dbReference type="GO" id="GO:0042025">
    <property type="term" value="C:host cell nucleus"/>
    <property type="evidence" value="ECO:0007669"/>
    <property type="project" value="UniProtKB-SubCell"/>
</dbReference>
<dbReference type="GO" id="GO:0003677">
    <property type="term" value="F:DNA binding"/>
    <property type="evidence" value="ECO:0007669"/>
    <property type="project" value="UniProtKB-UniRule"/>
</dbReference>
<dbReference type="GO" id="GO:0008270">
    <property type="term" value="F:zinc ion binding"/>
    <property type="evidence" value="ECO:0007669"/>
    <property type="project" value="UniProtKB-KW"/>
</dbReference>
<dbReference type="GO" id="GO:0006351">
    <property type="term" value="P:DNA-templated transcription"/>
    <property type="evidence" value="ECO:0007669"/>
    <property type="project" value="UniProtKB-UniRule"/>
</dbReference>
<dbReference type="GO" id="GO:0006355">
    <property type="term" value="P:regulation of DNA-templated transcription"/>
    <property type="evidence" value="ECO:0007669"/>
    <property type="project" value="UniProtKB-UniRule"/>
</dbReference>
<dbReference type="GO" id="GO:0052150">
    <property type="term" value="P:symbiont-mediated perturbation of host apoptosis"/>
    <property type="evidence" value="ECO:0007669"/>
    <property type="project" value="UniProtKB-KW"/>
</dbReference>
<dbReference type="GO" id="GO:0039648">
    <property type="term" value="P:symbiont-mediated perturbation of host ubiquitin-like protein modification"/>
    <property type="evidence" value="ECO:0007669"/>
    <property type="project" value="UniProtKB-UniRule"/>
</dbReference>
<dbReference type="GO" id="GO:0052170">
    <property type="term" value="P:symbiont-mediated suppression of host innate immune response"/>
    <property type="evidence" value="ECO:0007669"/>
    <property type="project" value="UniProtKB-KW"/>
</dbReference>
<dbReference type="GO" id="GO:0039502">
    <property type="term" value="P:symbiont-mediated suppression of host type I interferon-mediated signaling pathway"/>
    <property type="evidence" value="ECO:0007669"/>
    <property type="project" value="UniProtKB-UniRule"/>
</dbReference>
<dbReference type="Gene3D" id="3.30.240.40">
    <property type="entry name" value="E6 early regulatory protein"/>
    <property type="match status" value="2"/>
</dbReference>
<dbReference type="HAMAP" id="MF_04006">
    <property type="entry name" value="HPV_E6"/>
    <property type="match status" value="1"/>
</dbReference>
<dbReference type="InterPro" id="IPR001334">
    <property type="entry name" value="E6"/>
</dbReference>
<dbReference type="InterPro" id="IPR038575">
    <property type="entry name" value="E6_sf"/>
</dbReference>
<dbReference type="Pfam" id="PF00518">
    <property type="entry name" value="E6"/>
    <property type="match status" value="1"/>
</dbReference>
<dbReference type="SUPFAM" id="SSF161229">
    <property type="entry name" value="E6 C-terminal domain-like"/>
    <property type="match status" value="2"/>
</dbReference>
<accession>P27229</accession>